<accession>Q2EY13</accession>
<reference evidence="6 7" key="1">
    <citation type="journal article" date="2006" name="Dev. Dyn.">
        <title>Cloning of vertebrate protogenin (Prtg) and comparative expression analysis during axis elongation.</title>
        <authorList>
            <person name="Vesque C."/>
            <person name="Anselme I."/>
            <person name="Couve E."/>
            <person name="Charnay P."/>
            <person name="Schneider-Maunoury S."/>
        </authorList>
    </citation>
    <scope>NUCLEOTIDE SEQUENCE [MRNA]</scope>
    <scope>TISSUE SPECIFICITY</scope>
    <scope>DEVELOPMENTAL STAGE</scope>
</reference>
<sequence length="1069" mass="117548">MGSVRWKTHQQWLIIFWILSFSGVFGFSELWFSIEPQDVSVSAGQHVVLDCQAGGESPVSVRWRENGVQIQESECVRLLSNGSLCVSNLTQQRDEGYYQCVANNQYGAIISHRARLTITGVLVFSAHPVPLELRLGSVARFSCAVNRSPADISWEINQRSLPQDSDRITVLPNGVLQIRNVTMRDAGKYRCVAANAASRVTSREAELVLIPVGGPRRLLKPLIIAGPQNISVALHQPVVLECLAEGNPRPLVSWSRADSKPIDVSAASVLGNGNLMISAVKAHHSGTYVCRATTPGTRNYTTAAGNVTVLPPSLVEKPESQTRPRAGTARFSCQAEGTPTPQITWFKNGEVIRTNGRTKMYNNKLVITQIIPEDDAFYQCLAENSQGSVVSTSRLIVVQSENRPSAPRNIHAETISSSAILLAWERPQYNADKVIAYSIHYMKSEGLNNEEYQAVIGNDTTSHIVDDLEPARNYTFYIVAYMAMGASRMSEQVTRHTLEDVPLRTPELSLTSRSPTDILVSWQPLPPKLSRGRVSAYRLSYRTATDEQVNSVELPVSGENGTQYLLQDLQPDTIYLIRMSVSTRVGWSQPSAWSSHRTPKTSSATVPPAPNLELEPLNCTSVSVRWFPAASDVLIQGFKLSFHPDGQSEDSITQLPPQDHQHTITALNPRVKYHVKVLAFSANGDGYQAHQTVNTPGCPSTPNRRLAALPPPDHTHAKANSSSAVHLSWGRPAFSSGKPVTFSVRYGPASPSEASSVRYIQTSEQTVMVTGLQPNTRYEFAVRLHMDQMSSPWSATVYQRTLLEAPMSPPESVKVTLIEADTALVCWKQPNQPNLSVTHYTVLYASQSSWLAGEWQVLQREGTNTMALLEKLESGNVYLVKISASNLAGDGPFSNTVELAVKGKPHHGKNPRHADSHAEKTAFIDGLYHIDEKSMSGIIVGVCIALSCIILCIFILLSKTQTQKSASSKMIGSMRNEVMHNEASSANQQPAENAEVLLPMMRNHFIDAKGGSNLLINHAGPINCGSQTKRKRWSIFNHSQRSNESKNETEDPACLYEVGKTVLCYEDEA</sequence>
<proteinExistence type="evidence at transcript level"/>
<organism>
    <name type="scientific">Danio rerio</name>
    <name type="common">Zebrafish</name>
    <name type="synonym">Brachydanio rerio</name>
    <dbReference type="NCBI Taxonomy" id="7955"/>
    <lineage>
        <taxon>Eukaryota</taxon>
        <taxon>Metazoa</taxon>
        <taxon>Chordata</taxon>
        <taxon>Craniata</taxon>
        <taxon>Vertebrata</taxon>
        <taxon>Euteleostomi</taxon>
        <taxon>Actinopterygii</taxon>
        <taxon>Neopterygii</taxon>
        <taxon>Teleostei</taxon>
        <taxon>Ostariophysi</taxon>
        <taxon>Cypriniformes</taxon>
        <taxon>Danionidae</taxon>
        <taxon>Danioninae</taxon>
        <taxon>Danio</taxon>
    </lineage>
</organism>
<keyword id="KW-0217">Developmental protein</keyword>
<keyword id="KW-1015">Disulfide bond</keyword>
<keyword id="KW-0325">Glycoprotein</keyword>
<keyword id="KW-0393">Immunoglobulin domain</keyword>
<keyword id="KW-0472">Membrane</keyword>
<keyword id="KW-1185">Reference proteome</keyword>
<keyword id="KW-0677">Repeat</keyword>
<keyword id="KW-0732">Signal</keyword>
<keyword id="KW-0812">Transmembrane</keyword>
<keyword id="KW-1133">Transmembrane helix</keyword>
<name>PRTGB_DANRE</name>
<evidence type="ECO:0000255" key="1"/>
<evidence type="ECO:0000255" key="2">
    <source>
        <dbReference type="PROSITE-ProRule" id="PRU00114"/>
    </source>
</evidence>
<evidence type="ECO:0000255" key="3">
    <source>
        <dbReference type="PROSITE-ProRule" id="PRU00316"/>
    </source>
</evidence>
<evidence type="ECO:0000256" key="4">
    <source>
        <dbReference type="SAM" id="MobiDB-lite"/>
    </source>
</evidence>
<evidence type="ECO:0000269" key="5">
    <source>
    </source>
</evidence>
<evidence type="ECO:0000305" key="6"/>
<evidence type="ECO:0000312" key="7">
    <source>
        <dbReference type="EMBL" id="ABC96183.1"/>
    </source>
</evidence>
<evidence type="ECO:0000312" key="8">
    <source>
        <dbReference type="ZFIN" id="ZDB-GENE-060302-1"/>
    </source>
</evidence>
<comment type="function">
    <text evidence="5">May play a role in anteroposterior axis elongation.</text>
</comment>
<comment type="subcellular location">
    <subcellularLocation>
        <location evidence="1">Membrane</location>
        <topology evidence="1">Single-pass membrane protein</topology>
    </subcellularLocation>
</comment>
<comment type="tissue specificity">
    <text evidence="5">Initially expressed in the ventral forebrain and ventral spinal cord. Later, also expressed in the midbrain and in parts of the diencephalon and hindbrain.</text>
</comment>
<comment type="developmental stage">
    <text evidence="5">Expression is detected between the 10 s and 48 hour post-fertilization stages.</text>
</comment>
<comment type="similarity">
    <text evidence="1">Belongs to the immunoglobulin superfamily. DCC family.</text>
</comment>
<feature type="signal peptide" evidence="1">
    <location>
        <begin position="1"/>
        <end position="26"/>
    </location>
</feature>
<feature type="chain" id="PRO_5000141194" description="Protogenin B" evidence="1">
    <location>
        <begin position="27"/>
        <end position="1069"/>
    </location>
</feature>
<feature type="topological domain" description="Extracellular" evidence="1">
    <location>
        <begin position="27"/>
        <end position="936"/>
    </location>
</feature>
<feature type="transmembrane region" description="Helical" evidence="1">
    <location>
        <begin position="937"/>
        <end position="957"/>
    </location>
</feature>
<feature type="topological domain" description="Cytoplasmic" evidence="1">
    <location>
        <begin position="958"/>
        <end position="1069"/>
    </location>
</feature>
<feature type="domain" description="Ig-like 1" evidence="1">
    <location>
        <begin position="30"/>
        <end position="117"/>
    </location>
</feature>
<feature type="domain" description="Ig-like 2" evidence="1">
    <location>
        <begin position="122"/>
        <end position="208"/>
    </location>
</feature>
<feature type="domain" description="Ig-like 3" evidence="1">
    <location>
        <begin position="221"/>
        <end position="308"/>
    </location>
</feature>
<feature type="domain" description="Ig-like 4" evidence="1">
    <location>
        <begin position="312"/>
        <end position="396"/>
    </location>
</feature>
<feature type="domain" description="Fibronectin type-III 1" evidence="3">
    <location>
        <begin position="406"/>
        <end position="500"/>
    </location>
</feature>
<feature type="domain" description="Fibronectin type-III 2" evidence="3">
    <location>
        <begin position="502"/>
        <end position="601"/>
    </location>
</feature>
<feature type="domain" description="Fibronectin type-III 3" evidence="3">
    <location>
        <begin position="608"/>
        <end position="701"/>
    </location>
</feature>
<feature type="domain" description="Fibronectin type-III 4" evidence="3">
    <location>
        <begin position="711"/>
        <end position="804"/>
    </location>
</feature>
<feature type="domain" description="Fibronectin type-III 5" evidence="3">
    <location>
        <begin position="809"/>
        <end position="904"/>
    </location>
</feature>
<feature type="region of interest" description="Disordered" evidence="4">
    <location>
        <begin position="317"/>
        <end position="336"/>
    </location>
</feature>
<feature type="region of interest" description="Disordered" evidence="4">
    <location>
        <begin position="590"/>
        <end position="609"/>
    </location>
</feature>
<feature type="compositionally biased region" description="Polar residues" evidence="4">
    <location>
        <begin position="590"/>
        <end position="605"/>
    </location>
</feature>
<feature type="glycosylation site" description="N-linked (GlcNAc...) asparagine" evidence="1">
    <location>
        <position position="81"/>
    </location>
</feature>
<feature type="glycosylation site" description="N-linked (GlcNAc...) asparagine" evidence="1">
    <location>
        <position position="88"/>
    </location>
</feature>
<feature type="glycosylation site" description="N-linked (GlcNAc...) asparagine" evidence="1">
    <location>
        <position position="180"/>
    </location>
</feature>
<feature type="glycosylation site" description="N-linked (GlcNAc...) asparagine" evidence="1">
    <location>
        <position position="229"/>
    </location>
</feature>
<feature type="glycosylation site" description="N-linked (GlcNAc...) asparagine" evidence="1">
    <location>
        <position position="299"/>
    </location>
</feature>
<feature type="glycosylation site" description="N-linked (GlcNAc...) asparagine" evidence="1">
    <location>
        <position position="306"/>
    </location>
</feature>
<feature type="glycosylation site" description="N-linked (GlcNAc...) asparagine" evidence="1">
    <location>
        <position position="458"/>
    </location>
</feature>
<feature type="glycosylation site" description="N-linked (GlcNAc...) asparagine" evidence="1">
    <location>
        <position position="473"/>
    </location>
</feature>
<feature type="glycosylation site" description="N-linked (GlcNAc...) asparagine" evidence="1">
    <location>
        <position position="560"/>
    </location>
</feature>
<feature type="glycosylation site" description="N-linked (GlcNAc...) asparagine" evidence="1">
    <location>
        <position position="618"/>
    </location>
</feature>
<feature type="glycosylation site" description="N-linked (GlcNAc...) asparagine" evidence="1">
    <location>
        <position position="720"/>
    </location>
</feature>
<feature type="glycosylation site" description="N-linked (GlcNAc...) asparagine" evidence="1">
    <location>
        <position position="834"/>
    </location>
</feature>
<feature type="disulfide bond" evidence="2">
    <location>
        <begin position="51"/>
        <end position="100"/>
    </location>
</feature>
<feature type="disulfide bond" evidence="2">
    <location>
        <begin position="143"/>
        <end position="191"/>
    </location>
</feature>
<feature type="disulfide bond" evidence="2">
    <location>
        <begin position="242"/>
        <end position="290"/>
    </location>
</feature>
<feature type="disulfide bond" evidence="2">
    <location>
        <begin position="333"/>
        <end position="380"/>
    </location>
</feature>
<feature type="non-terminal residue" evidence="7">
    <location>
        <position position="1069"/>
    </location>
</feature>
<protein>
    <recommendedName>
        <fullName>Protogenin B</fullName>
    </recommendedName>
</protein>
<gene>
    <name evidence="8" type="primary">prtgb</name>
</gene>
<dbReference type="EMBL" id="DQ360116">
    <property type="protein sequence ID" value="ABC96183.1"/>
    <property type="molecule type" value="mRNA"/>
</dbReference>
<dbReference type="SMR" id="Q2EY13"/>
<dbReference type="STRING" id="7955.ENSDARP00000059192"/>
<dbReference type="GlyCosmos" id="Q2EY13">
    <property type="glycosylation" value="12 sites, No reported glycans"/>
</dbReference>
<dbReference type="PaxDb" id="7955-ENSDARP00000059192"/>
<dbReference type="AGR" id="ZFIN:ZDB-GENE-060302-1"/>
<dbReference type="ZFIN" id="ZDB-GENE-060302-1">
    <property type="gene designation" value="prtgb"/>
</dbReference>
<dbReference type="eggNOG" id="KOG4221">
    <property type="taxonomic scope" value="Eukaryota"/>
</dbReference>
<dbReference type="InParanoid" id="Q2EY13"/>
<dbReference type="PhylomeDB" id="Q2EY13"/>
<dbReference type="Proteomes" id="UP000000437">
    <property type="component" value="Unplaced"/>
</dbReference>
<dbReference type="GO" id="GO:0016020">
    <property type="term" value="C:membrane"/>
    <property type="evidence" value="ECO:0007669"/>
    <property type="project" value="UniProtKB-SubCell"/>
</dbReference>
<dbReference type="GO" id="GO:0098609">
    <property type="term" value="P:cell-cell adhesion"/>
    <property type="evidence" value="ECO:0000318"/>
    <property type="project" value="GO_Central"/>
</dbReference>
<dbReference type="CDD" id="cd00063">
    <property type="entry name" value="FN3"/>
    <property type="match status" value="5"/>
</dbReference>
<dbReference type="FunFam" id="2.60.40.10:FF:000189">
    <property type="entry name" value="Neogenin isoform 3"/>
    <property type="match status" value="1"/>
</dbReference>
<dbReference type="FunFam" id="2.60.40.10:FF:000828">
    <property type="entry name" value="Protogenin"/>
    <property type="match status" value="1"/>
</dbReference>
<dbReference type="FunFam" id="2.60.40.10:FF:000455">
    <property type="entry name" value="Protogenin A"/>
    <property type="match status" value="1"/>
</dbReference>
<dbReference type="FunFam" id="2.60.40.10:FF:000551">
    <property type="entry name" value="Protogenin A"/>
    <property type="match status" value="1"/>
</dbReference>
<dbReference type="FunFam" id="2.60.40.10:FF:000299">
    <property type="entry name" value="protogenin isoform X2"/>
    <property type="match status" value="1"/>
</dbReference>
<dbReference type="Gene3D" id="2.60.40.10">
    <property type="entry name" value="Immunoglobulins"/>
    <property type="match status" value="9"/>
</dbReference>
<dbReference type="InterPro" id="IPR003961">
    <property type="entry name" value="FN3_dom"/>
</dbReference>
<dbReference type="InterPro" id="IPR036116">
    <property type="entry name" value="FN3_sf"/>
</dbReference>
<dbReference type="InterPro" id="IPR007110">
    <property type="entry name" value="Ig-like_dom"/>
</dbReference>
<dbReference type="InterPro" id="IPR036179">
    <property type="entry name" value="Ig-like_dom_sf"/>
</dbReference>
<dbReference type="InterPro" id="IPR013783">
    <property type="entry name" value="Ig-like_fold"/>
</dbReference>
<dbReference type="InterPro" id="IPR013098">
    <property type="entry name" value="Ig_I-set"/>
</dbReference>
<dbReference type="InterPro" id="IPR003599">
    <property type="entry name" value="Ig_sub"/>
</dbReference>
<dbReference type="InterPro" id="IPR003598">
    <property type="entry name" value="Ig_sub2"/>
</dbReference>
<dbReference type="PANTHER" id="PTHR44170">
    <property type="entry name" value="PROTEIN SIDEKICK"/>
    <property type="match status" value="1"/>
</dbReference>
<dbReference type="PANTHER" id="PTHR44170:SF47">
    <property type="entry name" value="PROTOGENIN"/>
    <property type="match status" value="1"/>
</dbReference>
<dbReference type="Pfam" id="PF00041">
    <property type="entry name" value="fn3"/>
    <property type="match status" value="5"/>
</dbReference>
<dbReference type="Pfam" id="PF07679">
    <property type="entry name" value="I-set"/>
    <property type="match status" value="3"/>
</dbReference>
<dbReference type="Pfam" id="PF13927">
    <property type="entry name" value="Ig_3"/>
    <property type="match status" value="1"/>
</dbReference>
<dbReference type="SMART" id="SM00060">
    <property type="entry name" value="FN3"/>
    <property type="match status" value="5"/>
</dbReference>
<dbReference type="SMART" id="SM00409">
    <property type="entry name" value="IG"/>
    <property type="match status" value="4"/>
</dbReference>
<dbReference type="SMART" id="SM00408">
    <property type="entry name" value="IGc2"/>
    <property type="match status" value="4"/>
</dbReference>
<dbReference type="SUPFAM" id="SSF49265">
    <property type="entry name" value="Fibronectin type III"/>
    <property type="match status" value="3"/>
</dbReference>
<dbReference type="SUPFAM" id="SSF48726">
    <property type="entry name" value="Immunoglobulin"/>
    <property type="match status" value="4"/>
</dbReference>
<dbReference type="PROSITE" id="PS50853">
    <property type="entry name" value="FN3"/>
    <property type="match status" value="5"/>
</dbReference>
<dbReference type="PROSITE" id="PS50835">
    <property type="entry name" value="IG_LIKE"/>
    <property type="match status" value="4"/>
</dbReference>